<evidence type="ECO:0000250" key="1"/>
<evidence type="ECO:0000250" key="2">
    <source>
        <dbReference type="UniProtKB" id="P21291"/>
    </source>
</evidence>
<evidence type="ECO:0000250" key="3">
    <source>
        <dbReference type="UniProtKB" id="P47875"/>
    </source>
</evidence>
<evidence type="ECO:0000250" key="4">
    <source>
        <dbReference type="UniProtKB" id="P97315"/>
    </source>
</evidence>
<evidence type="ECO:0000255" key="5"/>
<evidence type="ECO:0000255" key="6">
    <source>
        <dbReference type="PROSITE-ProRule" id="PRU00125"/>
    </source>
</evidence>
<accession>Q3MHY1</accession>
<reference key="1">
    <citation type="submission" date="2005-09" db="EMBL/GenBank/DDBJ databases">
        <authorList>
            <consortium name="NIH - Mammalian Gene Collection (MGC) project"/>
        </authorList>
    </citation>
    <scope>NUCLEOTIDE SEQUENCE [LARGE SCALE MRNA]</scope>
    <source>
        <strain>Hereford</strain>
        <tissue>Ascending colon</tissue>
    </source>
</reference>
<gene>
    <name type="primary">CSRP1</name>
</gene>
<organism>
    <name type="scientific">Bos taurus</name>
    <name type="common">Bovine</name>
    <dbReference type="NCBI Taxonomy" id="9913"/>
    <lineage>
        <taxon>Eukaryota</taxon>
        <taxon>Metazoa</taxon>
        <taxon>Chordata</taxon>
        <taxon>Craniata</taxon>
        <taxon>Vertebrata</taxon>
        <taxon>Euteleostomi</taxon>
        <taxon>Mammalia</taxon>
        <taxon>Eutheria</taxon>
        <taxon>Laurasiatheria</taxon>
        <taxon>Artiodactyla</taxon>
        <taxon>Ruminantia</taxon>
        <taxon>Pecora</taxon>
        <taxon>Bovidae</taxon>
        <taxon>Bovinae</taxon>
        <taxon>Bos</taxon>
    </lineage>
</organism>
<sequence>MPNWGGGKKCGVCQKTVYFAEEVQCEGSSFHKSCFLCLVCKKNLDSTTVAVHGEEIYCKSCYGKKYGPKGYGYGQGAGTLSMDKGESLGIRHEEAPGHRPTTNPNTSKFAQKVGGSERCPRCSQAVYAAEKVIGAGKSWHKSCFRCAKCGKGLESTTLADKDGEIYCKGCYAKNFGPKGFGFGQGAGALVHSE</sequence>
<feature type="chain" id="PRO_0000075714" description="Cysteine and glycine-rich protein 1">
    <location>
        <begin position="1"/>
        <end position="193"/>
    </location>
</feature>
<feature type="domain" description="LIM zinc-binding 1" evidence="6">
    <location>
        <begin position="10"/>
        <end position="61"/>
    </location>
</feature>
<feature type="domain" description="LIM zinc-binding 2" evidence="6">
    <location>
        <begin position="119"/>
        <end position="170"/>
    </location>
</feature>
<feature type="short sequence motif" description="Nuclear localization signal" evidence="5">
    <location>
        <begin position="64"/>
        <end position="69"/>
    </location>
</feature>
<feature type="modified residue" description="Phosphoserine" evidence="3">
    <location>
        <position position="81"/>
    </location>
</feature>
<feature type="modified residue" description="N6-acetyllysine" evidence="4">
    <location>
        <position position="84"/>
    </location>
</feature>
<feature type="modified residue" description="N6-acetyllysine" evidence="2">
    <location>
        <position position="112"/>
    </location>
</feature>
<feature type="modified residue" description="N6-acetyllysine" evidence="2">
    <location>
        <position position="131"/>
    </location>
</feature>
<feature type="modified residue" description="N6-acetyllysine" evidence="4">
    <location>
        <position position="137"/>
    </location>
</feature>
<feature type="modified residue" description="N6-acetyllysine" evidence="4">
    <location>
        <position position="161"/>
    </location>
</feature>
<feature type="modified residue" description="Phosphoserine" evidence="2">
    <location>
        <position position="192"/>
    </location>
</feature>
<comment type="function">
    <text evidence="1">Could play a role in neuronal development.</text>
</comment>
<comment type="subunit">
    <text evidence="2">Interacts with ASCC1; ASCC2 and TRIP4.</text>
</comment>
<comment type="subcellular location">
    <subcellularLocation>
        <location evidence="2">Nucleus</location>
    </subcellularLocation>
</comment>
<name>CSRP1_BOVIN</name>
<keyword id="KW-0007">Acetylation</keyword>
<keyword id="KW-0440">LIM domain</keyword>
<keyword id="KW-0479">Metal-binding</keyword>
<keyword id="KW-0539">Nucleus</keyword>
<keyword id="KW-0597">Phosphoprotein</keyword>
<keyword id="KW-1185">Reference proteome</keyword>
<keyword id="KW-0677">Repeat</keyword>
<keyword id="KW-0862">Zinc</keyword>
<protein>
    <recommendedName>
        <fullName>Cysteine and glycine-rich protein 1</fullName>
    </recommendedName>
    <alternativeName>
        <fullName>Cysteine-rich protein 1</fullName>
        <shortName>CRP1</shortName>
    </alternativeName>
</protein>
<dbReference type="EMBL" id="BC104539">
    <property type="protein sequence ID" value="AAI04540.1"/>
    <property type="molecule type" value="mRNA"/>
</dbReference>
<dbReference type="RefSeq" id="NP_001077240.1">
    <property type="nucleotide sequence ID" value="NM_001083771.1"/>
</dbReference>
<dbReference type="RefSeq" id="XP_059731510.1">
    <property type="nucleotide sequence ID" value="XM_059875527.1"/>
</dbReference>
<dbReference type="RefSeq" id="XP_059731511.1">
    <property type="nucleotide sequence ID" value="XM_059875528.1"/>
</dbReference>
<dbReference type="SMR" id="Q3MHY1"/>
<dbReference type="FunCoup" id="Q3MHY1">
    <property type="interactions" value="1032"/>
</dbReference>
<dbReference type="IntAct" id="Q3MHY1">
    <property type="interactions" value="1"/>
</dbReference>
<dbReference type="STRING" id="9913.ENSBTAP00000021369"/>
<dbReference type="PaxDb" id="9913-ENSBTAP00000021369"/>
<dbReference type="PeptideAtlas" id="Q3MHY1"/>
<dbReference type="Ensembl" id="ENSBTAT00000021369.6">
    <property type="protein sequence ID" value="ENSBTAP00000021369.5"/>
    <property type="gene ID" value="ENSBTAG00000016057.7"/>
</dbReference>
<dbReference type="GeneID" id="615329"/>
<dbReference type="KEGG" id="bta:615329"/>
<dbReference type="CTD" id="1465"/>
<dbReference type="VEuPathDB" id="HostDB:ENSBTAG00000016057"/>
<dbReference type="VGNC" id="VGNC:27773">
    <property type="gene designation" value="CSRP1"/>
</dbReference>
<dbReference type="eggNOG" id="KOG1700">
    <property type="taxonomic scope" value="Eukaryota"/>
</dbReference>
<dbReference type="GeneTree" id="ENSGT00940000156777"/>
<dbReference type="HOGENOM" id="CLU_054591_1_0_1"/>
<dbReference type="InParanoid" id="Q3MHY1"/>
<dbReference type="OMA" id="NYVAHEQ"/>
<dbReference type="OrthoDB" id="8062037at2759"/>
<dbReference type="TreeFam" id="TF313758"/>
<dbReference type="Proteomes" id="UP000009136">
    <property type="component" value="Chromosome 16"/>
</dbReference>
<dbReference type="Bgee" id="ENSBTAG00000016057">
    <property type="expression patterns" value="Expressed in trachea and 105 other cell types or tissues"/>
</dbReference>
<dbReference type="GO" id="GO:0005737">
    <property type="term" value="C:cytoplasm"/>
    <property type="evidence" value="ECO:0000318"/>
    <property type="project" value="GO_Central"/>
</dbReference>
<dbReference type="GO" id="GO:0005634">
    <property type="term" value="C:nucleus"/>
    <property type="evidence" value="ECO:0000318"/>
    <property type="project" value="GO_Central"/>
</dbReference>
<dbReference type="GO" id="GO:0030018">
    <property type="term" value="C:Z disc"/>
    <property type="evidence" value="ECO:0000318"/>
    <property type="project" value="GO_Central"/>
</dbReference>
<dbReference type="GO" id="GO:0042805">
    <property type="term" value="F:actinin binding"/>
    <property type="evidence" value="ECO:0000318"/>
    <property type="project" value="GO_Central"/>
</dbReference>
<dbReference type="GO" id="GO:0046872">
    <property type="term" value="F:metal ion binding"/>
    <property type="evidence" value="ECO:0007669"/>
    <property type="project" value="UniProtKB-KW"/>
</dbReference>
<dbReference type="GO" id="GO:0008307">
    <property type="term" value="F:structural constituent of muscle"/>
    <property type="evidence" value="ECO:0000318"/>
    <property type="project" value="GO_Central"/>
</dbReference>
<dbReference type="GO" id="GO:0060537">
    <property type="term" value="P:muscle tissue development"/>
    <property type="evidence" value="ECO:0000318"/>
    <property type="project" value="GO_Central"/>
</dbReference>
<dbReference type="GO" id="GO:0045214">
    <property type="term" value="P:sarcomere organization"/>
    <property type="evidence" value="ECO:0000318"/>
    <property type="project" value="GO_Central"/>
</dbReference>
<dbReference type="CDD" id="cd09479">
    <property type="entry name" value="LIM1_CRP1"/>
    <property type="match status" value="1"/>
</dbReference>
<dbReference type="CDD" id="cd09403">
    <property type="entry name" value="LIM2_CRP"/>
    <property type="match status" value="1"/>
</dbReference>
<dbReference type="FunFam" id="2.10.110.10:FF:000001">
    <property type="entry name" value="Cysteine and glycine-rich protein 1"/>
    <property type="match status" value="1"/>
</dbReference>
<dbReference type="FunFam" id="2.10.110.10:FF:000124">
    <property type="entry name" value="Cysteine and glycine-rich protein 1a"/>
    <property type="match status" value="1"/>
</dbReference>
<dbReference type="Gene3D" id="2.10.110.10">
    <property type="entry name" value="Cysteine Rich Protein"/>
    <property type="match status" value="2"/>
</dbReference>
<dbReference type="InterPro" id="IPR001781">
    <property type="entry name" value="Znf_LIM"/>
</dbReference>
<dbReference type="PANTHER" id="PTHR24215:SF23">
    <property type="entry name" value="CYSTEINE AND GLYCINE-RICH PROTEIN 1"/>
    <property type="match status" value="1"/>
</dbReference>
<dbReference type="PANTHER" id="PTHR24215">
    <property type="entry name" value="RHO-GTPASE-ACTIVATING PROTEIN LRG1"/>
    <property type="match status" value="1"/>
</dbReference>
<dbReference type="Pfam" id="PF00412">
    <property type="entry name" value="LIM"/>
    <property type="match status" value="2"/>
</dbReference>
<dbReference type="SMART" id="SM00132">
    <property type="entry name" value="LIM"/>
    <property type="match status" value="2"/>
</dbReference>
<dbReference type="SUPFAM" id="SSF57716">
    <property type="entry name" value="Glucocorticoid receptor-like (DNA-binding domain)"/>
    <property type="match status" value="4"/>
</dbReference>
<dbReference type="PROSITE" id="PS00478">
    <property type="entry name" value="LIM_DOMAIN_1"/>
    <property type="match status" value="2"/>
</dbReference>
<dbReference type="PROSITE" id="PS50023">
    <property type="entry name" value="LIM_DOMAIN_2"/>
    <property type="match status" value="2"/>
</dbReference>
<proteinExistence type="evidence at transcript level"/>